<comment type="function">
    <text evidence="1">Binds directly to 23S rRNA. The L1 stalk is quite mobile in the ribosome, and is involved in E site tRNA release.</text>
</comment>
<comment type="function">
    <text evidence="1">Protein L1 is also a translational repressor protein, it controls the translation of the L11 operon by binding to its mRNA.</text>
</comment>
<comment type="subunit">
    <text evidence="1">Part of the 50S ribosomal subunit.</text>
</comment>
<comment type="similarity">
    <text evidence="1">Belongs to the universal ribosomal protein uL1 family.</text>
</comment>
<evidence type="ECO:0000255" key="1">
    <source>
        <dbReference type="HAMAP-Rule" id="MF_01318"/>
    </source>
</evidence>
<evidence type="ECO:0000305" key="2"/>
<gene>
    <name evidence="1" type="primary">rplA</name>
    <name type="ordered locus">Dvul_0442</name>
</gene>
<dbReference type="EMBL" id="CP000527">
    <property type="protein sequence ID" value="ABM27465.1"/>
    <property type="molecule type" value="Genomic_DNA"/>
</dbReference>
<dbReference type="RefSeq" id="WP_010940185.1">
    <property type="nucleotide sequence ID" value="NC_008751.1"/>
</dbReference>
<dbReference type="SMR" id="A1VAJ9"/>
<dbReference type="KEGG" id="dvl:Dvul_0442"/>
<dbReference type="HOGENOM" id="CLU_062853_0_0_7"/>
<dbReference type="Proteomes" id="UP000009173">
    <property type="component" value="Chromosome"/>
</dbReference>
<dbReference type="GO" id="GO:0022625">
    <property type="term" value="C:cytosolic large ribosomal subunit"/>
    <property type="evidence" value="ECO:0007669"/>
    <property type="project" value="TreeGrafter"/>
</dbReference>
<dbReference type="GO" id="GO:0019843">
    <property type="term" value="F:rRNA binding"/>
    <property type="evidence" value="ECO:0007669"/>
    <property type="project" value="UniProtKB-UniRule"/>
</dbReference>
<dbReference type="GO" id="GO:0003735">
    <property type="term" value="F:structural constituent of ribosome"/>
    <property type="evidence" value="ECO:0007669"/>
    <property type="project" value="InterPro"/>
</dbReference>
<dbReference type="GO" id="GO:0000049">
    <property type="term" value="F:tRNA binding"/>
    <property type="evidence" value="ECO:0007669"/>
    <property type="project" value="UniProtKB-KW"/>
</dbReference>
<dbReference type="GO" id="GO:0006417">
    <property type="term" value="P:regulation of translation"/>
    <property type="evidence" value="ECO:0007669"/>
    <property type="project" value="UniProtKB-KW"/>
</dbReference>
<dbReference type="GO" id="GO:0006412">
    <property type="term" value="P:translation"/>
    <property type="evidence" value="ECO:0007669"/>
    <property type="project" value="UniProtKB-UniRule"/>
</dbReference>
<dbReference type="CDD" id="cd00403">
    <property type="entry name" value="Ribosomal_L1"/>
    <property type="match status" value="1"/>
</dbReference>
<dbReference type="FunFam" id="3.40.50.790:FF:000001">
    <property type="entry name" value="50S ribosomal protein L1"/>
    <property type="match status" value="1"/>
</dbReference>
<dbReference type="Gene3D" id="3.30.190.20">
    <property type="match status" value="1"/>
</dbReference>
<dbReference type="Gene3D" id="3.40.50.790">
    <property type="match status" value="1"/>
</dbReference>
<dbReference type="HAMAP" id="MF_01318_B">
    <property type="entry name" value="Ribosomal_uL1_B"/>
    <property type="match status" value="1"/>
</dbReference>
<dbReference type="InterPro" id="IPR005878">
    <property type="entry name" value="Ribosom_uL1_bac-type"/>
</dbReference>
<dbReference type="InterPro" id="IPR002143">
    <property type="entry name" value="Ribosomal_uL1"/>
</dbReference>
<dbReference type="InterPro" id="IPR023674">
    <property type="entry name" value="Ribosomal_uL1-like"/>
</dbReference>
<dbReference type="InterPro" id="IPR028364">
    <property type="entry name" value="Ribosomal_uL1/biogenesis"/>
</dbReference>
<dbReference type="InterPro" id="IPR016095">
    <property type="entry name" value="Ribosomal_uL1_3-a/b-sand"/>
</dbReference>
<dbReference type="InterPro" id="IPR023673">
    <property type="entry name" value="Ribosomal_uL1_CS"/>
</dbReference>
<dbReference type="NCBIfam" id="TIGR01169">
    <property type="entry name" value="rplA_bact"/>
    <property type="match status" value="1"/>
</dbReference>
<dbReference type="PANTHER" id="PTHR36427">
    <property type="entry name" value="54S RIBOSOMAL PROTEIN L1, MITOCHONDRIAL"/>
    <property type="match status" value="1"/>
</dbReference>
<dbReference type="PANTHER" id="PTHR36427:SF3">
    <property type="entry name" value="LARGE RIBOSOMAL SUBUNIT PROTEIN UL1M"/>
    <property type="match status" value="1"/>
</dbReference>
<dbReference type="Pfam" id="PF00687">
    <property type="entry name" value="Ribosomal_L1"/>
    <property type="match status" value="1"/>
</dbReference>
<dbReference type="PIRSF" id="PIRSF002155">
    <property type="entry name" value="Ribosomal_L1"/>
    <property type="match status" value="1"/>
</dbReference>
<dbReference type="SUPFAM" id="SSF56808">
    <property type="entry name" value="Ribosomal protein L1"/>
    <property type="match status" value="1"/>
</dbReference>
<dbReference type="PROSITE" id="PS01199">
    <property type="entry name" value="RIBOSOMAL_L1"/>
    <property type="match status" value="1"/>
</dbReference>
<name>RL1_NITV4</name>
<sequence length="235" mass="24779">MPKHGKKYRNATEGLDLTVKYSVEDAVAKSLAAAPAKFDETVDVAICLGVDPKYSDQMVRGAVTMPNGLGKTVRVAVFCKGEKEAEAKAAGADVAGAEELVAKIKEGWLDFDKAIATPDVMALVGQIGRVLGPRGLMPNAKTGTVTFDITTAIKEMKAGRVEFKVDKAGVLHAPLGKVSFGSEKILGNLKALIDTVNRLKPSSAKGTYMQAMAISTTMGPGVKVDPTLIKKFIEG</sequence>
<keyword id="KW-0678">Repressor</keyword>
<keyword id="KW-0687">Ribonucleoprotein</keyword>
<keyword id="KW-0689">Ribosomal protein</keyword>
<keyword id="KW-0694">RNA-binding</keyword>
<keyword id="KW-0699">rRNA-binding</keyword>
<keyword id="KW-0810">Translation regulation</keyword>
<keyword id="KW-0820">tRNA-binding</keyword>
<feature type="chain" id="PRO_0000308001" description="Large ribosomal subunit protein uL1">
    <location>
        <begin position="1"/>
        <end position="235"/>
    </location>
</feature>
<reference key="1">
    <citation type="journal article" date="2009" name="Environ. Microbiol.">
        <title>Contribution of mobile genetic elements to Desulfovibrio vulgaris genome plasticity.</title>
        <authorList>
            <person name="Walker C.B."/>
            <person name="Stolyar S."/>
            <person name="Chivian D."/>
            <person name="Pinel N."/>
            <person name="Gabster J.A."/>
            <person name="Dehal P.S."/>
            <person name="He Z."/>
            <person name="Yang Z.K."/>
            <person name="Yen H.C."/>
            <person name="Zhou J."/>
            <person name="Wall J.D."/>
            <person name="Hazen T.C."/>
            <person name="Arkin A.P."/>
            <person name="Stahl D.A."/>
        </authorList>
    </citation>
    <scope>NUCLEOTIDE SEQUENCE [LARGE SCALE GENOMIC DNA]</scope>
    <source>
        <strain>DP4</strain>
    </source>
</reference>
<organism>
    <name type="scientific">Nitratidesulfovibrio vulgaris (strain DP4)</name>
    <name type="common">Desulfovibrio vulgaris</name>
    <dbReference type="NCBI Taxonomy" id="391774"/>
    <lineage>
        <taxon>Bacteria</taxon>
        <taxon>Pseudomonadati</taxon>
        <taxon>Thermodesulfobacteriota</taxon>
        <taxon>Desulfovibrionia</taxon>
        <taxon>Desulfovibrionales</taxon>
        <taxon>Desulfovibrionaceae</taxon>
        <taxon>Nitratidesulfovibrio</taxon>
    </lineage>
</organism>
<protein>
    <recommendedName>
        <fullName evidence="1">Large ribosomal subunit protein uL1</fullName>
    </recommendedName>
    <alternativeName>
        <fullName evidence="2">50S ribosomal protein L1</fullName>
    </alternativeName>
</protein>
<proteinExistence type="inferred from homology"/>
<accession>A1VAJ9</accession>